<name>NUSB_PHOPR</name>
<organism>
    <name type="scientific">Photobacterium profundum (strain SS9)</name>
    <dbReference type="NCBI Taxonomy" id="298386"/>
    <lineage>
        <taxon>Bacteria</taxon>
        <taxon>Pseudomonadati</taxon>
        <taxon>Pseudomonadota</taxon>
        <taxon>Gammaproteobacteria</taxon>
        <taxon>Vibrionales</taxon>
        <taxon>Vibrionaceae</taxon>
        <taxon>Photobacterium</taxon>
    </lineage>
</organism>
<feature type="chain" id="PRO_0000265558" description="Transcription antitermination protein NusB">
    <location>
        <begin position="1"/>
        <end position="151"/>
    </location>
</feature>
<dbReference type="EMBL" id="CR378665">
    <property type="protein sequence ID" value="CAG19214.1"/>
    <property type="molecule type" value="Genomic_DNA"/>
</dbReference>
<dbReference type="SMR" id="Q6LU11"/>
<dbReference type="STRING" id="298386.PBPRA0801"/>
<dbReference type="KEGG" id="ppr:PBPRA0801"/>
<dbReference type="eggNOG" id="COG0781">
    <property type="taxonomic scope" value="Bacteria"/>
</dbReference>
<dbReference type="HOGENOM" id="CLU_087843_4_1_6"/>
<dbReference type="Proteomes" id="UP000000593">
    <property type="component" value="Chromosome 1"/>
</dbReference>
<dbReference type="GO" id="GO:0005829">
    <property type="term" value="C:cytosol"/>
    <property type="evidence" value="ECO:0007669"/>
    <property type="project" value="TreeGrafter"/>
</dbReference>
<dbReference type="GO" id="GO:0003723">
    <property type="term" value="F:RNA binding"/>
    <property type="evidence" value="ECO:0007669"/>
    <property type="project" value="UniProtKB-UniRule"/>
</dbReference>
<dbReference type="GO" id="GO:0006353">
    <property type="term" value="P:DNA-templated transcription termination"/>
    <property type="evidence" value="ECO:0007669"/>
    <property type="project" value="UniProtKB-UniRule"/>
</dbReference>
<dbReference type="GO" id="GO:0031564">
    <property type="term" value="P:transcription antitermination"/>
    <property type="evidence" value="ECO:0007669"/>
    <property type="project" value="UniProtKB-KW"/>
</dbReference>
<dbReference type="FunFam" id="1.10.940.10:FF:000001">
    <property type="entry name" value="Transcription antitermination factor NusB"/>
    <property type="match status" value="1"/>
</dbReference>
<dbReference type="Gene3D" id="1.10.940.10">
    <property type="entry name" value="NusB-like"/>
    <property type="match status" value="1"/>
</dbReference>
<dbReference type="HAMAP" id="MF_00073">
    <property type="entry name" value="NusB"/>
    <property type="match status" value="1"/>
</dbReference>
<dbReference type="InterPro" id="IPR035926">
    <property type="entry name" value="NusB-like_sf"/>
</dbReference>
<dbReference type="InterPro" id="IPR011605">
    <property type="entry name" value="NusB_fam"/>
</dbReference>
<dbReference type="InterPro" id="IPR006027">
    <property type="entry name" value="NusB_RsmB_TIM44"/>
</dbReference>
<dbReference type="NCBIfam" id="TIGR01951">
    <property type="entry name" value="nusB"/>
    <property type="match status" value="1"/>
</dbReference>
<dbReference type="PANTHER" id="PTHR11078:SF3">
    <property type="entry name" value="ANTITERMINATION NUSB DOMAIN-CONTAINING PROTEIN"/>
    <property type="match status" value="1"/>
</dbReference>
<dbReference type="PANTHER" id="PTHR11078">
    <property type="entry name" value="N UTILIZATION SUBSTANCE PROTEIN B-RELATED"/>
    <property type="match status" value="1"/>
</dbReference>
<dbReference type="Pfam" id="PF01029">
    <property type="entry name" value="NusB"/>
    <property type="match status" value="1"/>
</dbReference>
<dbReference type="SUPFAM" id="SSF48013">
    <property type="entry name" value="NusB-like"/>
    <property type="match status" value="1"/>
</dbReference>
<protein>
    <recommendedName>
        <fullName evidence="1">Transcription antitermination protein NusB</fullName>
    </recommendedName>
    <alternativeName>
        <fullName evidence="1">Antitermination factor NusB</fullName>
    </alternativeName>
</protein>
<evidence type="ECO:0000255" key="1">
    <source>
        <dbReference type="HAMAP-Rule" id="MF_00073"/>
    </source>
</evidence>
<sequence>MKPAARRNARHFAIQAIYSWQITKGNVAEIEQQFLSDDKFEEEEHQADAPILAAPHTDLNYFHDLLNGVVQNHQELDSKMRPYLSRPLQDLDQMELALLRLAMYEMTKREDVPYKVVINEAIELAKIFGAEDSHKFVNGVLDKAAPTLRKK</sequence>
<accession>Q6LU11</accession>
<gene>
    <name evidence="1" type="primary">nusB</name>
    <name type="ordered locus">PBPRA0801</name>
</gene>
<comment type="function">
    <text evidence="1">Involved in transcription antitermination. Required for transcription of ribosomal RNA (rRNA) genes. Binds specifically to the boxA antiterminator sequence of the ribosomal RNA (rrn) operons.</text>
</comment>
<comment type="similarity">
    <text evidence="1">Belongs to the NusB family.</text>
</comment>
<proteinExistence type="inferred from homology"/>
<reference key="1">
    <citation type="journal article" date="2005" name="Science">
        <title>Life at depth: Photobacterium profundum genome sequence and expression analysis.</title>
        <authorList>
            <person name="Vezzi A."/>
            <person name="Campanaro S."/>
            <person name="D'Angelo M."/>
            <person name="Simonato F."/>
            <person name="Vitulo N."/>
            <person name="Lauro F.M."/>
            <person name="Cestaro A."/>
            <person name="Malacrida G."/>
            <person name="Simionati B."/>
            <person name="Cannata N."/>
            <person name="Romualdi C."/>
            <person name="Bartlett D.H."/>
            <person name="Valle G."/>
        </authorList>
    </citation>
    <scope>NUCLEOTIDE SEQUENCE [LARGE SCALE GENOMIC DNA]</scope>
    <source>
        <strain>ATCC BAA-1253 / SS9</strain>
    </source>
</reference>
<keyword id="KW-1185">Reference proteome</keyword>
<keyword id="KW-0694">RNA-binding</keyword>
<keyword id="KW-0804">Transcription</keyword>
<keyword id="KW-0889">Transcription antitermination</keyword>
<keyword id="KW-0805">Transcription regulation</keyword>